<evidence type="ECO:0000255" key="1">
    <source>
        <dbReference type="HAMAP-Rule" id="MF_01973"/>
    </source>
</evidence>
<evidence type="ECO:0000255" key="2">
    <source>
        <dbReference type="PROSITE-ProRule" id="PRU01122"/>
    </source>
</evidence>
<evidence type="ECO:0000255" key="3">
    <source>
        <dbReference type="PROSITE-ProRule" id="PRU01123"/>
    </source>
</evidence>
<evidence type="ECO:0000256" key="4">
    <source>
        <dbReference type="SAM" id="MobiDB-lite"/>
    </source>
</evidence>
<gene>
    <name evidence="1" type="primary">lon</name>
    <name type="ordered locus">LIC_10608</name>
</gene>
<comment type="function">
    <text evidence="1">ATP-dependent serine protease that mediates the selective degradation of mutant and abnormal proteins as well as certain short-lived regulatory proteins. Required for cellular homeostasis and for survival from DNA damage and developmental changes induced by stress. Degrades polypeptides processively to yield small peptide fragments that are 5 to 10 amino acids long. Binds to DNA in a double-stranded, site-specific manner.</text>
</comment>
<comment type="catalytic activity">
    <reaction evidence="1">
        <text>Hydrolysis of proteins in presence of ATP.</text>
        <dbReference type="EC" id="3.4.21.53"/>
    </reaction>
</comment>
<comment type="subunit">
    <text evidence="1">Homohexamer. Organized in a ring with a central cavity.</text>
</comment>
<comment type="subcellular location">
    <subcellularLocation>
        <location evidence="1">Cytoplasm</location>
    </subcellularLocation>
</comment>
<comment type="induction">
    <text evidence="1">By heat shock.</text>
</comment>
<comment type="similarity">
    <text evidence="1">Belongs to the peptidase S16 family.</text>
</comment>
<proteinExistence type="inferred from homology"/>
<organism>
    <name type="scientific">Leptospira interrogans serogroup Icterohaemorrhagiae serovar copenhageni (strain Fiocruz L1-130)</name>
    <dbReference type="NCBI Taxonomy" id="267671"/>
    <lineage>
        <taxon>Bacteria</taxon>
        <taxon>Pseudomonadati</taxon>
        <taxon>Spirochaetota</taxon>
        <taxon>Spirochaetia</taxon>
        <taxon>Leptospirales</taxon>
        <taxon>Leptospiraceae</taxon>
        <taxon>Leptospira</taxon>
    </lineage>
</organism>
<protein>
    <recommendedName>
        <fullName evidence="1">Lon protease</fullName>
        <ecNumber evidence="1">3.4.21.53</ecNumber>
    </recommendedName>
    <alternativeName>
        <fullName evidence="1">ATP-dependent protease La</fullName>
    </alternativeName>
</protein>
<keyword id="KW-0067">ATP-binding</keyword>
<keyword id="KW-0963">Cytoplasm</keyword>
<keyword id="KW-0378">Hydrolase</keyword>
<keyword id="KW-0547">Nucleotide-binding</keyword>
<keyword id="KW-0645">Protease</keyword>
<keyword id="KW-0720">Serine protease</keyword>
<keyword id="KW-0346">Stress response</keyword>
<reference key="1">
    <citation type="journal article" date="2004" name="J. Bacteriol.">
        <title>Comparative genomics of two Leptospira interrogans serovars reveals novel insights into physiology and pathogenesis.</title>
        <authorList>
            <person name="Nascimento A.L.T.O."/>
            <person name="Ko A.I."/>
            <person name="Martins E.A.L."/>
            <person name="Monteiro-Vitorello C.B."/>
            <person name="Ho P.L."/>
            <person name="Haake D.A."/>
            <person name="Verjovski-Almeida S."/>
            <person name="Hartskeerl R.A."/>
            <person name="Marques M.V."/>
            <person name="Oliveira M.C."/>
            <person name="Menck C.F.M."/>
            <person name="Leite L.C.C."/>
            <person name="Carrer H."/>
            <person name="Coutinho L.L."/>
            <person name="Degrave W.M."/>
            <person name="Dellagostin O.A."/>
            <person name="El-Dorry H."/>
            <person name="Ferro E.S."/>
            <person name="Ferro M.I.T."/>
            <person name="Furlan L.R."/>
            <person name="Gamberini M."/>
            <person name="Giglioti E.A."/>
            <person name="Goes-Neto A."/>
            <person name="Goldman G.H."/>
            <person name="Goldman M.H.S."/>
            <person name="Harakava R."/>
            <person name="Jeronimo S.M.B."/>
            <person name="Junqueira-de-Azevedo I.L.M."/>
            <person name="Kimura E.T."/>
            <person name="Kuramae E.E."/>
            <person name="Lemos E.G.M."/>
            <person name="Lemos M.V.F."/>
            <person name="Marino C.L."/>
            <person name="Nunes L.R."/>
            <person name="de Oliveira R.C."/>
            <person name="Pereira G.G."/>
            <person name="Reis M.S."/>
            <person name="Schriefer A."/>
            <person name="Siqueira W.J."/>
            <person name="Sommer P."/>
            <person name="Tsai S.M."/>
            <person name="Simpson A.J.G."/>
            <person name="Ferro J.A."/>
            <person name="Camargo L.E.A."/>
            <person name="Kitajima J.P."/>
            <person name="Setubal J.C."/>
            <person name="Van Sluys M.A."/>
        </authorList>
    </citation>
    <scope>NUCLEOTIDE SEQUENCE [LARGE SCALE GENOMIC DNA]</scope>
    <source>
        <strain>Fiocruz L1-130</strain>
    </source>
</reference>
<dbReference type="EC" id="3.4.21.53" evidence="1"/>
<dbReference type="EMBL" id="AE016823">
    <property type="protein sequence ID" value="AAS69229.1"/>
    <property type="molecule type" value="Genomic_DNA"/>
</dbReference>
<dbReference type="RefSeq" id="WP_000398444.1">
    <property type="nucleotide sequence ID" value="NC_005823.1"/>
</dbReference>
<dbReference type="SMR" id="Q72UP9"/>
<dbReference type="GeneID" id="61143953"/>
<dbReference type="KEGG" id="lic:LIC_10608"/>
<dbReference type="HOGENOM" id="CLU_004109_4_3_12"/>
<dbReference type="Proteomes" id="UP000007037">
    <property type="component" value="Chromosome I"/>
</dbReference>
<dbReference type="GO" id="GO:0005737">
    <property type="term" value="C:cytoplasm"/>
    <property type="evidence" value="ECO:0007669"/>
    <property type="project" value="UniProtKB-SubCell"/>
</dbReference>
<dbReference type="GO" id="GO:0005524">
    <property type="term" value="F:ATP binding"/>
    <property type="evidence" value="ECO:0007669"/>
    <property type="project" value="UniProtKB-UniRule"/>
</dbReference>
<dbReference type="GO" id="GO:0016887">
    <property type="term" value="F:ATP hydrolysis activity"/>
    <property type="evidence" value="ECO:0007669"/>
    <property type="project" value="UniProtKB-UniRule"/>
</dbReference>
<dbReference type="GO" id="GO:0004176">
    <property type="term" value="F:ATP-dependent peptidase activity"/>
    <property type="evidence" value="ECO:0007669"/>
    <property type="project" value="UniProtKB-UniRule"/>
</dbReference>
<dbReference type="GO" id="GO:0043565">
    <property type="term" value="F:sequence-specific DNA binding"/>
    <property type="evidence" value="ECO:0007669"/>
    <property type="project" value="UniProtKB-UniRule"/>
</dbReference>
<dbReference type="GO" id="GO:0004252">
    <property type="term" value="F:serine-type endopeptidase activity"/>
    <property type="evidence" value="ECO:0007669"/>
    <property type="project" value="UniProtKB-UniRule"/>
</dbReference>
<dbReference type="GO" id="GO:0034605">
    <property type="term" value="P:cellular response to heat"/>
    <property type="evidence" value="ECO:0007669"/>
    <property type="project" value="UniProtKB-UniRule"/>
</dbReference>
<dbReference type="GO" id="GO:0006515">
    <property type="term" value="P:protein quality control for misfolded or incompletely synthesized proteins"/>
    <property type="evidence" value="ECO:0007669"/>
    <property type="project" value="UniProtKB-UniRule"/>
</dbReference>
<dbReference type="CDD" id="cd19500">
    <property type="entry name" value="RecA-like_Lon"/>
    <property type="match status" value="1"/>
</dbReference>
<dbReference type="FunFam" id="3.40.50.300:FF:000021">
    <property type="entry name" value="Lon protease homolog"/>
    <property type="match status" value="1"/>
</dbReference>
<dbReference type="Gene3D" id="1.10.8.60">
    <property type="match status" value="1"/>
</dbReference>
<dbReference type="Gene3D" id="1.20.5.5270">
    <property type="match status" value="1"/>
</dbReference>
<dbReference type="Gene3D" id="1.20.58.1480">
    <property type="match status" value="1"/>
</dbReference>
<dbReference type="Gene3D" id="3.30.230.10">
    <property type="match status" value="1"/>
</dbReference>
<dbReference type="Gene3D" id="2.30.130.40">
    <property type="entry name" value="LON domain-like"/>
    <property type="match status" value="1"/>
</dbReference>
<dbReference type="Gene3D" id="3.40.50.300">
    <property type="entry name" value="P-loop containing nucleotide triphosphate hydrolases"/>
    <property type="match status" value="1"/>
</dbReference>
<dbReference type="HAMAP" id="MF_01973">
    <property type="entry name" value="lon_bact"/>
    <property type="match status" value="1"/>
</dbReference>
<dbReference type="InterPro" id="IPR003593">
    <property type="entry name" value="AAA+_ATPase"/>
</dbReference>
<dbReference type="InterPro" id="IPR003959">
    <property type="entry name" value="ATPase_AAA_core"/>
</dbReference>
<dbReference type="InterPro" id="IPR027543">
    <property type="entry name" value="Lon_bac"/>
</dbReference>
<dbReference type="InterPro" id="IPR004815">
    <property type="entry name" value="Lon_bac/euk-typ"/>
</dbReference>
<dbReference type="InterPro" id="IPR054594">
    <property type="entry name" value="Lon_lid"/>
</dbReference>
<dbReference type="InterPro" id="IPR008269">
    <property type="entry name" value="Lon_proteolytic"/>
</dbReference>
<dbReference type="InterPro" id="IPR027065">
    <property type="entry name" value="Lon_Prtase"/>
</dbReference>
<dbReference type="InterPro" id="IPR003111">
    <property type="entry name" value="Lon_prtase_N"/>
</dbReference>
<dbReference type="InterPro" id="IPR046336">
    <property type="entry name" value="Lon_prtase_N_sf"/>
</dbReference>
<dbReference type="InterPro" id="IPR027417">
    <property type="entry name" value="P-loop_NTPase"/>
</dbReference>
<dbReference type="InterPro" id="IPR008268">
    <property type="entry name" value="Peptidase_S16_AS"/>
</dbReference>
<dbReference type="InterPro" id="IPR015947">
    <property type="entry name" value="PUA-like_sf"/>
</dbReference>
<dbReference type="InterPro" id="IPR020568">
    <property type="entry name" value="Ribosomal_Su5_D2-typ_SF"/>
</dbReference>
<dbReference type="InterPro" id="IPR014721">
    <property type="entry name" value="Ribsml_uS5_D2-typ_fold_subgr"/>
</dbReference>
<dbReference type="NCBIfam" id="TIGR00763">
    <property type="entry name" value="lon"/>
    <property type="match status" value="1"/>
</dbReference>
<dbReference type="PANTHER" id="PTHR43718">
    <property type="entry name" value="LON PROTEASE"/>
    <property type="match status" value="1"/>
</dbReference>
<dbReference type="PANTHER" id="PTHR43718:SF2">
    <property type="entry name" value="LON PROTEASE HOMOLOG, MITOCHONDRIAL"/>
    <property type="match status" value="1"/>
</dbReference>
<dbReference type="Pfam" id="PF00004">
    <property type="entry name" value="AAA"/>
    <property type="match status" value="1"/>
</dbReference>
<dbReference type="Pfam" id="PF05362">
    <property type="entry name" value="Lon_C"/>
    <property type="match status" value="1"/>
</dbReference>
<dbReference type="Pfam" id="PF22667">
    <property type="entry name" value="Lon_lid"/>
    <property type="match status" value="1"/>
</dbReference>
<dbReference type="Pfam" id="PF02190">
    <property type="entry name" value="LON_substr_bdg"/>
    <property type="match status" value="1"/>
</dbReference>
<dbReference type="PIRSF" id="PIRSF001174">
    <property type="entry name" value="Lon_proteas"/>
    <property type="match status" value="1"/>
</dbReference>
<dbReference type="PRINTS" id="PR00830">
    <property type="entry name" value="ENDOLAPTASE"/>
</dbReference>
<dbReference type="SMART" id="SM00382">
    <property type="entry name" value="AAA"/>
    <property type="match status" value="1"/>
</dbReference>
<dbReference type="SMART" id="SM00464">
    <property type="entry name" value="LON"/>
    <property type="match status" value="1"/>
</dbReference>
<dbReference type="SUPFAM" id="SSF52540">
    <property type="entry name" value="P-loop containing nucleoside triphosphate hydrolases"/>
    <property type="match status" value="1"/>
</dbReference>
<dbReference type="SUPFAM" id="SSF88697">
    <property type="entry name" value="PUA domain-like"/>
    <property type="match status" value="1"/>
</dbReference>
<dbReference type="SUPFAM" id="SSF54211">
    <property type="entry name" value="Ribosomal protein S5 domain 2-like"/>
    <property type="match status" value="1"/>
</dbReference>
<dbReference type="PROSITE" id="PS51787">
    <property type="entry name" value="LON_N"/>
    <property type="match status" value="1"/>
</dbReference>
<dbReference type="PROSITE" id="PS51786">
    <property type="entry name" value="LON_PROTEOLYTIC"/>
    <property type="match status" value="1"/>
</dbReference>
<dbReference type="PROSITE" id="PS01046">
    <property type="entry name" value="LON_SER"/>
    <property type="match status" value="1"/>
</dbReference>
<sequence length="839" mass="94786">MEGGPLEPLEDLSGIEENSIIPLDSILPPELFLIPIKSRPVFPGIITPLIVPSGKFAKAVEETVKGNSFLGLVLLKDEENEKETSENIYQYGVVAKILKKVNLPDNAVNILVNTIRRFKIESFVNKDPLVARVSYPEEEPGAPKNTTKAMMRTLLVMTRELAQNNPLFTEEMKLTMLNVNEPGKMADFVCSILNLEKEEYQSVIESNILKTRIEKVLLFLKKEIELVSIQREISDQIQDKIDKQQRQFFLREQLKAIQNELGIKDDKFEKKYEKFLERLKNLNADPEVIEEVTRELDKFSYADPNTGDYNVIRNYLDILESLPWEPAPVREIDLEKAKKTLDKDHYKLEDVKDRILEFLAVKKLKNDEKGTILLLVGPPGVGKTSIARSIAEAMGRKFFRFSVGGMRDEAEIKGHRRTYIGSMPGKIISALRITKERDCVILLDEIDKLSIGIQGDPASALLEVLDPEQNKNFRDHYLDLPFDISNVFFIATANTLDSISRILLDRMEIINLSGYITDEKVQIFQKYLWKKVLYKNGVTPYGIEFDKKAIVALIDSYSRESGVRGLEKVTDKLVRKIAIKIVRKESFPKIIQEKDLETFLGVPKFTDERMVRASVPGTALGLAWTSVGGATLLIEALFVKGKGGILLTGMLGKTMEESSNIALSYIKNLLYKEELFNNRMIHLHVPDGATPKDGPSAGITMASAILSLALNTKVKSGFGMTGELTLTGEVLAIGGLREKIVAAKRVGIHKIIYPKDNLQHLQEIPDYVKKGMYFFPVSRYEEVALLLFDEKVISKINPSFRENLKSIVNPTRKLSPKKKTTQKQKLSLSKQKGNNQKKK</sequence>
<feature type="chain" id="PRO_0000396577" description="Lon protease">
    <location>
        <begin position="1"/>
        <end position="839"/>
    </location>
</feature>
<feature type="domain" description="Lon N-terminal" evidence="3">
    <location>
        <begin position="31"/>
        <end position="224"/>
    </location>
</feature>
<feature type="domain" description="Lon proteolytic" evidence="2">
    <location>
        <begin position="613"/>
        <end position="790"/>
    </location>
</feature>
<feature type="region of interest" description="Disordered" evidence="4">
    <location>
        <begin position="807"/>
        <end position="839"/>
    </location>
</feature>
<feature type="compositionally biased region" description="Low complexity" evidence="4">
    <location>
        <begin position="823"/>
        <end position="832"/>
    </location>
</feature>
<feature type="active site" evidence="1">
    <location>
        <position position="696"/>
    </location>
</feature>
<feature type="active site" evidence="1">
    <location>
        <position position="739"/>
    </location>
</feature>
<feature type="binding site" evidence="1">
    <location>
        <begin position="377"/>
        <end position="384"/>
    </location>
    <ligand>
        <name>ATP</name>
        <dbReference type="ChEBI" id="CHEBI:30616"/>
    </ligand>
</feature>
<name>LON_LEPIC</name>
<accession>Q72UP9</accession>